<dbReference type="EC" id="2.7.12.2" evidence="2"/>
<dbReference type="EMBL" id="DQ489531">
    <property type="protein sequence ID" value="ABF47220.1"/>
    <property type="molecule type" value="mRNA"/>
</dbReference>
<dbReference type="RefSeq" id="NP_001041601.1">
    <property type="nucleotide sequence ID" value="NM_001048136.2"/>
</dbReference>
<dbReference type="SMR" id="Q1HG70"/>
<dbReference type="FunCoup" id="Q1HG70">
    <property type="interactions" value="2662"/>
</dbReference>
<dbReference type="STRING" id="9615.ENSCAFP00000043510"/>
<dbReference type="PaxDb" id="9612-ENSCAFP00000028245"/>
<dbReference type="Ensembl" id="ENSCAFT00000030400.5">
    <property type="protein sequence ID" value="ENSCAFP00000028245.5"/>
    <property type="gene ID" value="ENSCAFG00000019138.5"/>
</dbReference>
<dbReference type="GeneID" id="611939"/>
<dbReference type="KEGG" id="cfa:611939"/>
<dbReference type="CTD" id="5605"/>
<dbReference type="eggNOG" id="KOG0581">
    <property type="taxonomic scope" value="Eukaryota"/>
</dbReference>
<dbReference type="HOGENOM" id="CLU_000288_63_23_1"/>
<dbReference type="InParanoid" id="Q1HG70"/>
<dbReference type="OMA" id="QMTLTEP"/>
<dbReference type="OrthoDB" id="10942at33554"/>
<dbReference type="TreeFam" id="TF105137"/>
<dbReference type="Reactome" id="R-CFA-112411">
    <property type="pathway name" value="MAPK1 (ERK2) activation"/>
</dbReference>
<dbReference type="Reactome" id="R-CFA-445144">
    <property type="pathway name" value="Signal transduction by L1"/>
</dbReference>
<dbReference type="Reactome" id="R-CFA-5673000">
    <property type="pathway name" value="RAF activation"/>
</dbReference>
<dbReference type="Reactome" id="R-CFA-5674135">
    <property type="pathway name" value="MAP2K and MAPK activation"/>
</dbReference>
<dbReference type="Proteomes" id="UP000002254">
    <property type="component" value="Chromosome 20"/>
</dbReference>
<dbReference type="Proteomes" id="UP000694429">
    <property type="component" value="Unplaced"/>
</dbReference>
<dbReference type="Proteomes" id="UP000694542">
    <property type="component" value="Unplaced"/>
</dbReference>
<dbReference type="Proteomes" id="UP000805418">
    <property type="component" value="Unplaced"/>
</dbReference>
<dbReference type="GO" id="GO:0005769">
    <property type="term" value="C:early endosome"/>
    <property type="evidence" value="ECO:0007669"/>
    <property type="project" value="UniProtKB-ARBA"/>
</dbReference>
<dbReference type="GO" id="GO:0005925">
    <property type="term" value="C:focal adhesion"/>
    <property type="evidence" value="ECO:0007669"/>
    <property type="project" value="UniProtKB-ARBA"/>
</dbReference>
<dbReference type="GO" id="GO:0005770">
    <property type="term" value="C:late endosome"/>
    <property type="evidence" value="ECO:0007669"/>
    <property type="project" value="UniProtKB-ARBA"/>
</dbReference>
<dbReference type="GO" id="GO:0016020">
    <property type="term" value="C:membrane"/>
    <property type="evidence" value="ECO:0007669"/>
    <property type="project" value="UniProtKB-SubCell"/>
</dbReference>
<dbReference type="GO" id="GO:0005739">
    <property type="term" value="C:mitochondrion"/>
    <property type="evidence" value="ECO:0007669"/>
    <property type="project" value="UniProtKB-ARBA"/>
</dbReference>
<dbReference type="GO" id="GO:0005524">
    <property type="term" value="F:ATP binding"/>
    <property type="evidence" value="ECO:0007669"/>
    <property type="project" value="UniProtKB-KW"/>
</dbReference>
<dbReference type="GO" id="GO:0004708">
    <property type="term" value="F:MAP kinase kinase activity"/>
    <property type="evidence" value="ECO:0000318"/>
    <property type="project" value="GO_Central"/>
</dbReference>
<dbReference type="GO" id="GO:0046872">
    <property type="term" value="F:metal ion binding"/>
    <property type="evidence" value="ECO:0007669"/>
    <property type="project" value="UniProtKB-KW"/>
</dbReference>
<dbReference type="GO" id="GO:0106310">
    <property type="term" value="F:protein serine kinase activity"/>
    <property type="evidence" value="ECO:0007669"/>
    <property type="project" value="RHEA"/>
</dbReference>
<dbReference type="GO" id="GO:0004674">
    <property type="term" value="F:protein serine/threonine kinase activity"/>
    <property type="evidence" value="ECO:0007669"/>
    <property type="project" value="UniProtKB-KW"/>
</dbReference>
<dbReference type="GO" id="GO:0004713">
    <property type="term" value="F:protein tyrosine kinase activity"/>
    <property type="evidence" value="ECO:0007669"/>
    <property type="project" value="UniProtKB-KW"/>
</dbReference>
<dbReference type="GO" id="GO:0000165">
    <property type="term" value="P:MAPK cascade"/>
    <property type="evidence" value="ECO:0000318"/>
    <property type="project" value="GO_Central"/>
</dbReference>
<dbReference type="GO" id="GO:2000641">
    <property type="term" value="P:regulation of early endosome to late endosome transport"/>
    <property type="evidence" value="ECO:0007669"/>
    <property type="project" value="UniProtKB-ARBA"/>
</dbReference>
<dbReference type="GO" id="GO:0090170">
    <property type="term" value="P:regulation of Golgi inheritance"/>
    <property type="evidence" value="ECO:0007669"/>
    <property type="project" value="UniProtKB-ARBA"/>
</dbReference>
<dbReference type="GO" id="GO:0032872">
    <property type="term" value="P:regulation of stress-activated MAPK cascade"/>
    <property type="evidence" value="ECO:0007669"/>
    <property type="project" value="UniProtKB-ARBA"/>
</dbReference>
<dbReference type="CDD" id="cd06649">
    <property type="entry name" value="PKc_MEK2"/>
    <property type="match status" value="1"/>
</dbReference>
<dbReference type="FunFam" id="1.10.510.10:FF:000115">
    <property type="entry name" value="Dual specificity mitogen-activated protein kinase kinase 1"/>
    <property type="match status" value="1"/>
</dbReference>
<dbReference type="FunFam" id="3.30.200.20:FF:000100">
    <property type="entry name" value="Dual specificity mitogen-activated protein kinase kinase 1"/>
    <property type="match status" value="1"/>
</dbReference>
<dbReference type="Gene3D" id="3.30.200.20">
    <property type="entry name" value="Phosphorylase Kinase, domain 1"/>
    <property type="match status" value="1"/>
</dbReference>
<dbReference type="Gene3D" id="1.10.510.10">
    <property type="entry name" value="Transferase(Phosphotransferase) domain 1"/>
    <property type="match status" value="1"/>
</dbReference>
<dbReference type="InterPro" id="IPR011009">
    <property type="entry name" value="Kinase-like_dom_sf"/>
</dbReference>
<dbReference type="InterPro" id="IPR050915">
    <property type="entry name" value="MAP_kinase_kinase"/>
</dbReference>
<dbReference type="InterPro" id="IPR000719">
    <property type="entry name" value="Prot_kinase_dom"/>
</dbReference>
<dbReference type="InterPro" id="IPR017441">
    <property type="entry name" value="Protein_kinase_ATP_BS"/>
</dbReference>
<dbReference type="InterPro" id="IPR008271">
    <property type="entry name" value="Ser/Thr_kinase_AS"/>
</dbReference>
<dbReference type="PANTHER" id="PTHR47448">
    <property type="entry name" value="DUAL SPECIFICITY MITOGEN-ACTIVATED PROTEIN KINASE KINASE DSOR1-LIKE PROTEIN"/>
    <property type="match status" value="1"/>
</dbReference>
<dbReference type="PANTHER" id="PTHR47448:SF3">
    <property type="entry name" value="MITOGEN-ACTIVATED PROTEIN KINASE KINASE 2"/>
    <property type="match status" value="1"/>
</dbReference>
<dbReference type="Pfam" id="PF00069">
    <property type="entry name" value="Pkinase"/>
    <property type="match status" value="1"/>
</dbReference>
<dbReference type="SMART" id="SM00220">
    <property type="entry name" value="S_TKc"/>
    <property type="match status" value="1"/>
</dbReference>
<dbReference type="SUPFAM" id="SSF56112">
    <property type="entry name" value="Protein kinase-like (PK-like)"/>
    <property type="match status" value="1"/>
</dbReference>
<dbReference type="PROSITE" id="PS00107">
    <property type="entry name" value="PROTEIN_KINASE_ATP"/>
    <property type="match status" value="1"/>
</dbReference>
<dbReference type="PROSITE" id="PS50011">
    <property type="entry name" value="PROTEIN_KINASE_DOM"/>
    <property type="match status" value="1"/>
</dbReference>
<dbReference type="PROSITE" id="PS00108">
    <property type="entry name" value="PROTEIN_KINASE_ST"/>
    <property type="match status" value="1"/>
</dbReference>
<keyword id="KW-0007">Acetylation</keyword>
<keyword id="KW-0067">ATP-binding</keyword>
<keyword id="KW-0963">Cytoplasm</keyword>
<keyword id="KW-0418">Kinase</keyword>
<keyword id="KW-0460">Magnesium</keyword>
<keyword id="KW-0472">Membrane</keyword>
<keyword id="KW-0479">Metal-binding</keyword>
<keyword id="KW-0547">Nucleotide-binding</keyword>
<keyword id="KW-0597">Phosphoprotein</keyword>
<keyword id="KW-1185">Reference proteome</keyword>
<keyword id="KW-0723">Serine/threonine-protein kinase</keyword>
<keyword id="KW-0808">Transferase</keyword>
<keyword id="KW-0829">Tyrosine-protein kinase</keyword>
<accession>Q1HG70</accession>
<proteinExistence type="evidence at transcript level"/>
<organism>
    <name type="scientific">Canis lupus familiaris</name>
    <name type="common">Dog</name>
    <name type="synonym">Canis familiaris</name>
    <dbReference type="NCBI Taxonomy" id="9615"/>
    <lineage>
        <taxon>Eukaryota</taxon>
        <taxon>Metazoa</taxon>
        <taxon>Chordata</taxon>
        <taxon>Craniata</taxon>
        <taxon>Vertebrata</taxon>
        <taxon>Euteleostomi</taxon>
        <taxon>Mammalia</taxon>
        <taxon>Eutheria</taxon>
        <taxon>Laurasiatheria</taxon>
        <taxon>Carnivora</taxon>
        <taxon>Caniformia</taxon>
        <taxon>Canidae</taxon>
        <taxon>Canis</taxon>
    </lineage>
</organism>
<gene>
    <name type="primary">MAP2K2</name>
    <name type="synonym">MEK2</name>
</gene>
<sequence>MLARRKPVLPALTINPAIAEGPSPTSEGASEANLVDLQKKLAELELDEQQKKRLEAFLTQKAKVGELKDDDFERISELGAGNGGVVTKVQHRPSGLIMARKLIHLEIKPAIRNQIIRELQVLHECNSPYIVGFYGAFYSDGEISICMEHMDGGSLDQVLKEAKRIPEEILGKVSIAVLRGLAYLREKHQIMHRDVKPSNILVNSRGEIKLCDFGVSGQLIDSMANSFVGTRSYMSPERLQGTHYSVQSDIWSMGLSLVELSIGRYPIPPPDAKELEAIFGRPMVDGIEGEPHSISPRPRPPGRPISGHGTDSRPAMAIFELLDYIVNEPPPKLPNGVFTQDFQEFVNKCLIKNPAERADLKMLMSHTFIKRSEVEEVDFAGWLCKTLRLNQPSTPTRTAV</sequence>
<reference key="1">
    <citation type="submission" date="2006-04" db="EMBL/GenBank/DDBJ databases">
        <title>Constitutive activation of MEK1/2 in an invasive variant of MSV-transformed MDCK cell line.</title>
        <authorList>
            <person name="Guerard K.-P."/>
            <person name="Noel J."/>
        </authorList>
    </citation>
    <scope>NUCLEOTIDE SEQUENCE [MRNA]</scope>
</reference>
<comment type="function">
    <text evidence="2 4">Catalyzes the concomitant phosphorylation of a threonine and a tyrosine residue in a Thr-Glu-Tyr sequence located in MAP kinases. Activates the ERK1 and ERK2 MAP kinases (By similarity). Activates BRAF in a KSR1 or KSR2-dependent manner; by binding to KSR1 or KSR2 releases the inhibitory intramolecular interaction between KSR1 or KSR2 protein kinase and N-terminal domains which promotes KSR1 or KSR2-BRAF dimerization and BRAF activation (By similarity).</text>
</comment>
<comment type="catalytic activity">
    <reaction evidence="2">
        <text>L-seryl-[protein] + ATP = O-phospho-L-seryl-[protein] + ADP + H(+)</text>
        <dbReference type="Rhea" id="RHEA:17989"/>
        <dbReference type="Rhea" id="RHEA-COMP:9863"/>
        <dbReference type="Rhea" id="RHEA-COMP:11604"/>
        <dbReference type="ChEBI" id="CHEBI:15378"/>
        <dbReference type="ChEBI" id="CHEBI:29999"/>
        <dbReference type="ChEBI" id="CHEBI:30616"/>
        <dbReference type="ChEBI" id="CHEBI:83421"/>
        <dbReference type="ChEBI" id="CHEBI:456216"/>
        <dbReference type="EC" id="2.7.12.2"/>
    </reaction>
</comment>
<comment type="catalytic activity">
    <reaction evidence="2">
        <text>L-threonyl-[protein] + ATP = O-phospho-L-threonyl-[protein] + ADP + H(+)</text>
        <dbReference type="Rhea" id="RHEA:46608"/>
        <dbReference type="Rhea" id="RHEA-COMP:11060"/>
        <dbReference type="Rhea" id="RHEA-COMP:11605"/>
        <dbReference type="ChEBI" id="CHEBI:15378"/>
        <dbReference type="ChEBI" id="CHEBI:30013"/>
        <dbReference type="ChEBI" id="CHEBI:30616"/>
        <dbReference type="ChEBI" id="CHEBI:61977"/>
        <dbReference type="ChEBI" id="CHEBI:456216"/>
        <dbReference type="EC" id="2.7.12.2"/>
    </reaction>
</comment>
<comment type="catalytic activity">
    <reaction evidence="2">
        <text>L-tyrosyl-[protein] + ATP = O-phospho-L-tyrosyl-[protein] + ADP + H(+)</text>
        <dbReference type="Rhea" id="RHEA:10596"/>
        <dbReference type="Rhea" id="RHEA-COMP:10136"/>
        <dbReference type="Rhea" id="RHEA-COMP:20101"/>
        <dbReference type="ChEBI" id="CHEBI:15378"/>
        <dbReference type="ChEBI" id="CHEBI:30616"/>
        <dbReference type="ChEBI" id="CHEBI:46858"/>
        <dbReference type="ChEBI" id="CHEBI:61978"/>
        <dbReference type="ChEBI" id="CHEBI:456216"/>
        <dbReference type="EC" id="2.7.12.2"/>
    </reaction>
</comment>
<comment type="cofactor">
    <cofactor evidence="8">
        <name>Mg(2+)</name>
        <dbReference type="ChEBI" id="CHEBI:18420"/>
    </cofactor>
</comment>
<comment type="subunit">
    <text evidence="2 4">Interacts with MORG1 (By similarity). Interacts with SGK1 (By similarity). Interacts with KSR1. Interacts with KSR1 and BRAF; the interaction with KSR1 mediates KSR1-BRAF dimerization. Interacts with GLS (By similarity).</text>
</comment>
<comment type="subcellular location">
    <subcellularLocation>
        <location evidence="2">Cytoplasm</location>
    </subcellularLocation>
    <subcellularLocation>
        <location evidence="2">Membrane</location>
        <topology evidence="2">Peripheral membrane protein</topology>
    </subcellularLocation>
    <text evidence="2">Membrane localization is probably regulated by its interaction with KSR1.</text>
</comment>
<comment type="PTM">
    <text evidence="1">MAPKK is itself dependent on Ser/Thr phosphorylation for activity catalyzed by MAP kinase kinase kinases (RAF or MEKK1).</text>
</comment>
<comment type="similarity">
    <text evidence="8">Belongs to the protein kinase superfamily. STE Ser/Thr protein kinase family. MAP kinase kinase subfamily.</text>
</comment>
<name>MP2K2_CANLF</name>
<evidence type="ECO:0000250" key="1"/>
<evidence type="ECO:0000250" key="2">
    <source>
        <dbReference type="UniProtKB" id="P36507"/>
    </source>
</evidence>
<evidence type="ECO:0000250" key="3">
    <source>
        <dbReference type="UniProtKB" id="Q02750"/>
    </source>
</evidence>
<evidence type="ECO:0000250" key="4">
    <source>
        <dbReference type="UniProtKB" id="Q63932"/>
    </source>
</evidence>
<evidence type="ECO:0000255" key="5">
    <source>
        <dbReference type="PROSITE-ProRule" id="PRU00159"/>
    </source>
</evidence>
<evidence type="ECO:0000255" key="6">
    <source>
        <dbReference type="PROSITE-ProRule" id="PRU10027"/>
    </source>
</evidence>
<evidence type="ECO:0000256" key="7">
    <source>
        <dbReference type="SAM" id="MobiDB-lite"/>
    </source>
</evidence>
<evidence type="ECO:0000305" key="8"/>
<feature type="chain" id="PRO_0000289624" description="Dual specificity mitogen-activated protein kinase kinase 2">
    <location>
        <begin position="1"/>
        <end position="400"/>
    </location>
</feature>
<feature type="domain" description="Protein kinase" evidence="5">
    <location>
        <begin position="72"/>
        <end position="369"/>
    </location>
</feature>
<feature type="region of interest" description="Disordered" evidence="7">
    <location>
        <begin position="288"/>
        <end position="309"/>
    </location>
</feature>
<feature type="active site" description="Proton acceptor" evidence="5 6">
    <location>
        <position position="194"/>
    </location>
</feature>
<feature type="binding site" evidence="5">
    <location>
        <begin position="78"/>
        <end position="86"/>
    </location>
    <ligand>
        <name>ATP</name>
        <dbReference type="ChEBI" id="CHEBI:30616"/>
    </ligand>
</feature>
<feature type="binding site" evidence="5">
    <location>
        <position position="101"/>
    </location>
    <ligand>
        <name>ATP</name>
        <dbReference type="ChEBI" id="CHEBI:30616"/>
    </ligand>
</feature>
<feature type="site" description="Cleavage; by anthrax lethal factor" evidence="1">
    <location>
        <begin position="10"/>
        <end position="11"/>
    </location>
</feature>
<feature type="modified residue" description="N-acetylmethionine" evidence="2">
    <location>
        <position position="1"/>
    </location>
</feature>
<feature type="modified residue" description="Phosphoserine" evidence="2">
    <location>
        <position position="23"/>
    </location>
</feature>
<feature type="modified residue" description="Phosphoserine; by RAF" evidence="2">
    <location>
        <position position="222"/>
    </location>
</feature>
<feature type="modified residue" description="Phosphoserine" evidence="2">
    <location>
        <position position="226"/>
    </location>
</feature>
<feature type="modified residue" description="Phosphoserine" evidence="2">
    <location>
        <position position="293"/>
    </location>
</feature>
<feature type="modified residue" description="Phosphoserine" evidence="2">
    <location>
        <position position="295"/>
    </location>
</feature>
<feature type="modified residue" description="Phosphoserine" evidence="3">
    <location>
        <position position="306"/>
    </location>
</feature>
<feature type="modified residue" description="Phosphothreonine" evidence="2">
    <location>
        <position position="394"/>
    </location>
</feature>
<feature type="modified residue" description="Phosphothreonine" evidence="2">
    <location>
        <position position="396"/>
    </location>
</feature>
<protein>
    <recommendedName>
        <fullName>Dual specificity mitogen-activated protein kinase kinase 2</fullName>
        <shortName>MAP kinase kinase 2</shortName>
        <shortName>MAPKK 2</shortName>
        <ecNumber evidence="2">2.7.12.2</ecNumber>
    </recommendedName>
    <alternativeName>
        <fullName>ERK activator kinase 2</fullName>
    </alternativeName>
    <alternativeName>
        <fullName>MAPK/ERK kinase 2</fullName>
        <shortName>MEK 2</shortName>
    </alternativeName>
</protein>